<evidence type="ECO:0000250" key="1">
    <source>
        <dbReference type="UniProtKB" id="P30624"/>
    </source>
</evidence>
<evidence type="ECO:0000250" key="2">
    <source>
        <dbReference type="UniProtKB" id="P69451"/>
    </source>
</evidence>
<evidence type="ECO:0000269" key="3">
    <source>
    </source>
</evidence>
<evidence type="ECO:0000303" key="4">
    <source>
    </source>
</evidence>
<evidence type="ECO:0000305" key="5"/>
<evidence type="ECO:0000305" key="6">
    <source>
    </source>
</evidence>
<proteinExistence type="evidence at transcript level"/>
<comment type="function">
    <text evidence="3 6">AMP-binding domain-containing enzyme; part of the gene cluster that mediates the biosynthesis of the psychoactive metabolites ibotenic acid and muscimol (PubMed:32233056). The first committed step is glutamate hydroxylation by the 2-oxoglutarate-dependent dioxygenase iboH, and the last step is decarboxylation of ibotenic acid to muscimol by the decarboxylase iboD (PubMed:32233056). The order of the intermediate reactions is somewhat ambiguous (Probable). IboA likely activates the carboxylic acid at position 5 to introduce an amide bond, and the flavin monooxygenase iboF generates the N-O bond (Probable). There are several options for the latter step (Probable). One option is that iboF directly hydroxylates the amide nitrogen formed by iboA to produce a hydroxamic acid species (Probable). Another option is that iboF hydroxylates an external N-containing compound, whose resulting N-O bond is subsequently introduced into the hydroxyglutamate scaffold (Probable). The paralogous PLP-dependent cystathionine gamma-synthase-like enzymes iboG1 and iboG2 are likely involved in substitution of the OH group at position 3 by the O-N moiety (Probable). The first cyclic intermediate is most probably tricholomic acid which is likely desaturated to ibotenic acid by the cytochrome P450 monooxygenase iboC (Probable).</text>
</comment>
<comment type="cofactor">
    <cofactor evidence="1">
        <name>Mg(2+)</name>
        <dbReference type="ChEBI" id="CHEBI:18420"/>
    </cofactor>
</comment>
<comment type="pathway">
    <text evidence="6">Secondary metabolite biosynthesis.</text>
</comment>
<comment type="induction">
    <text evidence="3">Expression is highly induced during artificial growth in symbiosis with Populus, which is close to its natural condition.</text>
</comment>
<comment type="domain">
    <text evidence="1">The FACS motif is required for catalytic activity and substrate specificity.</text>
</comment>
<comment type="similarity">
    <text evidence="5">Belongs to the ATP-dependent AMP-binding enzyme family.</text>
</comment>
<dbReference type="EC" id="6.2.-.-" evidence="6"/>
<dbReference type="EMBL" id="KN818402">
    <property type="protein sequence ID" value="KIL56732.1"/>
    <property type="molecule type" value="Genomic_DNA"/>
</dbReference>
<dbReference type="SMR" id="A0A0C2W6G2"/>
<dbReference type="STRING" id="946122.A0A0C2W6G2"/>
<dbReference type="HOGENOM" id="CLU_037349_1_0_1"/>
<dbReference type="InParanoid" id="A0A0C2W6G2"/>
<dbReference type="OrthoDB" id="2944431at2759"/>
<dbReference type="BioCyc" id="MetaCyc:MONOMER-21260"/>
<dbReference type="Proteomes" id="UP000054549">
    <property type="component" value="Unassembled WGS sequence"/>
</dbReference>
<dbReference type="GO" id="GO:0005524">
    <property type="term" value="F:ATP binding"/>
    <property type="evidence" value="ECO:0007669"/>
    <property type="project" value="UniProtKB-KW"/>
</dbReference>
<dbReference type="GO" id="GO:0031956">
    <property type="term" value="F:medium-chain fatty acid-CoA ligase activity"/>
    <property type="evidence" value="ECO:0007669"/>
    <property type="project" value="TreeGrafter"/>
</dbReference>
<dbReference type="GO" id="GO:0046872">
    <property type="term" value="F:metal ion binding"/>
    <property type="evidence" value="ECO:0007669"/>
    <property type="project" value="UniProtKB-KW"/>
</dbReference>
<dbReference type="GO" id="GO:0006631">
    <property type="term" value="P:fatty acid metabolic process"/>
    <property type="evidence" value="ECO:0007669"/>
    <property type="project" value="TreeGrafter"/>
</dbReference>
<dbReference type="Gene3D" id="3.40.50.12780">
    <property type="entry name" value="N-terminal domain of ligase-like"/>
    <property type="match status" value="1"/>
</dbReference>
<dbReference type="InterPro" id="IPR000873">
    <property type="entry name" value="AMP-dep_synth/lig_dom"/>
</dbReference>
<dbReference type="InterPro" id="IPR042099">
    <property type="entry name" value="ANL_N_sf"/>
</dbReference>
<dbReference type="PANTHER" id="PTHR43201">
    <property type="entry name" value="ACYL-COA SYNTHETASE"/>
    <property type="match status" value="1"/>
</dbReference>
<dbReference type="PANTHER" id="PTHR43201:SF8">
    <property type="entry name" value="ACYL-COA SYNTHETASE FAMILY MEMBER 3"/>
    <property type="match status" value="1"/>
</dbReference>
<dbReference type="Pfam" id="PF00501">
    <property type="entry name" value="AMP-binding"/>
    <property type="match status" value="1"/>
</dbReference>
<dbReference type="Pfam" id="PF23562">
    <property type="entry name" value="AMP-binding_C_3"/>
    <property type="match status" value="1"/>
</dbReference>
<dbReference type="SUPFAM" id="SSF56801">
    <property type="entry name" value="Acetyl-CoA synthetase-like"/>
    <property type="match status" value="1"/>
</dbReference>
<sequence length="520" mass="57589">MDVALEDNHIALLQHRAKNSGNTVLFKLPILRGSEPPQEWNHITVAEFAAEVDRVAIFVMTELKARGIPPRSAVTVLYSGSRYQDLIYAIALARASYIPQMCPHILTHPGVIFALMEKAGSKIILYDPSLEPATTDCPYPKMALNPIETIDSSSTINSDSALPTIEDLSSGHADVCFFYLTSGSTSGSPKVVPLTQKFVSTYYKTQFGIWLDGRRFDTQNAFLSRGSICAVAPIIQYFGCLYTGSCIVQPSKMRFSTEELLTLVNVCGLNRMTTFGTWLAPHIQAAKKDPAALKLLQEMRTVSYGGVPISIADDDWCFQNGIPLMDMYATTECGTLMVSAPGKPARFMQPVPGISYRFDPFTDTTTGADNPASTQLLKLILLADSPQIPQPQLLSEDGNFHTGDLFEKQLDGSYLFRGRGDDWIKSEDSRFIDTKAIEEKINDVCSDLVKGCIVVGHLRPSPALFIEAYHDSISTISEDGLKELVLRRLEDFNARQLKHERITDKRLIFIVDEGNLPRTV</sequence>
<gene>
    <name evidence="4" type="primary">iboA</name>
    <name type="ORF">M378DRAFT_88879</name>
</gene>
<reference key="1">
    <citation type="journal article" date="2015" name="Nat. Genet.">
        <title>Convergent losses of decay mechanisms and rapid turnover of symbiosis genes in mycorrhizal mutualists.</title>
        <authorList>
            <consortium name="Mycorrhizal Genomics Initiative Consortium"/>
            <person name="Kohler A."/>
            <person name="Kuo A."/>
            <person name="Nagy L.G."/>
            <person name="Morin E."/>
            <person name="Barry K.W."/>
            <person name="Buscot F."/>
            <person name="Canbaeck B."/>
            <person name="Choi C."/>
            <person name="Cichocki N."/>
            <person name="Clum A."/>
            <person name="Colpaert J."/>
            <person name="Copeland A."/>
            <person name="Costa M.D."/>
            <person name="Dore J."/>
            <person name="Floudas D."/>
            <person name="Gay G."/>
            <person name="Girlanda M."/>
            <person name="Henrissat B."/>
            <person name="Herrmann S."/>
            <person name="Hess J."/>
            <person name="Hoegberg N."/>
            <person name="Johansson T."/>
            <person name="Khouja H.R."/>
            <person name="LaButti K."/>
            <person name="Lahrmann U."/>
            <person name="Levasseur A."/>
            <person name="Lindquist E.A."/>
            <person name="Lipzen A."/>
            <person name="Marmeisse R."/>
            <person name="Martino E."/>
            <person name="Murat C."/>
            <person name="Ngan C.Y."/>
            <person name="Nehls U."/>
            <person name="Plett J.M."/>
            <person name="Pringle A."/>
            <person name="Ohm R.A."/>
            <person name="Perotto S."/>
            <person name="Peter M."/>
            <person name="Riley R."/>
            <person name="Rineau F."/>
            <person name="Ruytinx J."/>
            <person name="Salamov A."/>
            <person name="Shah F."/>
            <person name="Sun H."/>
            <person name="Tarkka M."/>
            <person name="Tritt A."/>
            <person name="Veneault-Fourrey C."/>
            <person name="Zuccaro A."/>
            <person name="Tunlid A."/>
            <person name="Grigoriev I.V."/>
            <person name="Hibbett D.S."/>
            <person name="Martin F."/>
        </authorList>
    </citation>
    <scope>NUCLEOTIDE SEQUENCE [LARGE SCALE GENOMIC DNA]</scope>
    <source>
        <strain>Koide BX008</strain>
    </source>
</reference>
<reference key="2">
    <citation type="journal article" date="2020" name="Angew. Chem. Int. Ed.">
        <title>Ibotenic acid biosynthesis in the fly agaric is initiated by glutamate hydroxylation.</title>
        <authorList>
            <person name="Obermaier S."/>
            <person name="Mueller M."/>
        </authorList>
    </citation>
    <scope>FUNCTION</scope>
    <scope>INDUCTION</scope>
    <scope>PATHWAY</scope>
</reference>
<organism>
    <name type="scientific">Amanita muscaria (strain Koide BX008)</name>
    <dbReference type="NCBI Taxonomy" id="946122"/>
    <lineage>
        <taxon>Eukaryota</taxon>
        <taxon>Fungi</taxon>
        <taxon>Dikarya</taxon>
        <taxon>Basidiomycota</taxon>
        <taxon>Agaricomycotina</taxon>
        <taxon>Agaricomycetes</taxon>
        <taxon>Agaricomycetidae</taxon>
        <taxon>Agaricales</taxon>
        <taxon>Pluteineae</taxon>
        <taxon>Amanitaceae</taxon>
        <taxon>Amanita</taxon>
    </lineage>
</organism>
<keyword id="KW-0067">ATP-binding</keyword>
<keyword id="KW-0436">Ligase</keyword>
<keyword id="KW-0460">Magnesium</keyword>
<keyword id="KW-0479">Metal-binding</keyword>
<keyword id="KW-0547">Nucleotide-binding</keyword>
<keyword id="KW-1185">Reference proteome</keyword>
<name>IBOA_AMAMK</name>
<protein>
    <recommendedName>
        <fullName evidence="4">AMP-binding domain-containing enzyme iboA</fullName>
        <ecNumber evidence="6">6.2.-.-</ecNumber>
    </recommendedName>
    <alternativeName>
        <fullName evidence="4">Ibotenic acid biosynthesis cluster protein A</fullName>
    </alternativeName>
</protein>
<accession>A0A0C2W6G2</accession>
<feature type="chain" id="PRO_0000454917" description="AMP-binding domain-containing enzyme iboA">
    <location>
        <begin position="1"/>
        <end position="520"/>
    </location>
</feature>
<feature type="short sequence motif" description="FACS" evidence="1">
    <location>
        <begin position="397"/>
        <end position="447"/>
    </location>
</feature>
<feature type="binding site" evidence="2">
    <location>
        <begin position="180"/>
        <end position="191"/>
    </location>
    <ligand>
        <name>ATP</name>
        <dbReference type="ChEBI" id="CHEBI:30616"/>
    </ligand>
</feature>